<proteinExistence type="inferred from homology"/>
<feature type="signal peptide" evidence="1">
    <location>
        <begin position="1"/>
        <end position="22"/>
    </location>
</feature>
<feature type="chain" id="PRO_0000248559" description="GILT-like protein CBG03282">
    <location>
        <begin position="23"/>
        <end position="220"/>
    </location>
</feature>
<feature type="glycosylation site" description="N-linked (GlcNAc...) asparagine" evidence="1">
    <location>
        <position position="131"/>
    </location>
</feature>
<organism>
    <name type="scientific">Caenorhabditis briggsae</name>
    <dbReference type="NCBI Taxonomy" id="6238"/>
    <lineage>
        <taxon>Eukaryota</taxon>
        <taxon>Metazoa</taxon>
        <taxon>Ecdysozoa</taxon>
        <taxon>Nematoda</taxon>
        <taxon>Chromadorea</taxon>
        <taxon>Rhabditida</taxon>
        <taxon>Rhabditina</taxon>
        <taxon>Rhabditomorpha</taxon>
        <taxon>Rhabditoidea</taxon>
        <taxon>Rhabditidae</taxon>
        <taxon>Peloderinae</taxon>
        <taxon>Caenorhabditis</taxon>
    </lineage>
</organism>
<accession>Q61Z40</accession>
<accession>A8WSD9</accession>
<protein>
    <recommendedName>
        <fullName>GILT-like protein CBG03282</fullName>
    </recommendedName>
</protein>
<evidence type="ECO:0000255" key="1"/>
<evidence type="ECO:0000305" key="2"/>
<reference key="1">
    <citation type="journal article" date="2003" name="PLoS Biol.">
        <title>The genome sequence of Caenorhabditis briggsae: a platform for comparative genomics.</title>
        <authorList>
            <person name="Stein L.D."/>
            <person name="Bao Z."/>
            <person name="Blasiar D."/>
            <person name="Blumenthal T."/>
            <person name="Brent M.R."/>
            <person name="Chen N."/>
            <person name="Chinwalla A."/>
            <person name="Clarke L."/>
            <person name="Clee C."/>
            <person name="Coghlan A."/>
            <person name="Coulson A."/>
            <person name="D'Eustachio P."/>
            <person name="Fitch D.H.A."/>
            <person name="Fulton L.A."/>
            <person name="Fulton R.E."/>
            <person name="Griffiths-Jones S."/>
            <person name="Harris T.W."/>
            <person name="Hillier L.W."/>
            <person name="Kamath R."/>
            <person name="Kuwabara P.E."/>
            <person name="Mardis E.R."/>
            <person name="Marra M.A."/>
            <person name="Miner T.L."/>
            <person name="Minx P."/>
            <person name="Mullikin J.C."/>
            <person name="Plumb R.W."/>
            <person name="Rogers J."/>
            <person name="Schein J.E."/>
            <person name="Sohrmann M."/>
            <person name="Spieth J."/>
            <person name="Stajich J.E."/>
            <person name="Wei C."/>
            <person name="Willey D."/>
            <person name="Wilson R.K."/>
            <person name="Durbin R.M."/>
            <person name="Waterston R.H."/>
        </authorList>
    </citation>
    <scope>NUCLEOTIDE SEQUENCE [LARGE SCALE GENOMIC DNA]</scope>
    <source>
        <strain>AF16</strain>
    </source>
</reference>
<name>YO30_CAEBR</name>
<comment type="subcellular location">
    <subcellularLocation>
        <location evidence="2">Secreted</location>
    </subcellularLocation>
</comment>
<comment type="similarity">
    <text evidence="2">Belongs to the GILT family.</text>
</comment>
<gene>
    <name type="ORF">CBG03282</name>
</gene>
<sequence>MTIIRTLFVYYSFLFILVLCSSKDTEVNNGEKVNIVAFGEGRCSDTSFWMKWHWLPMWRMLGSTGRINFEYHPYGIKTTCVDSDSGDDVVCECHHGARECLLNQLQACVIEALPNFEEYMEVVTCIQGKQNISMAAEACFNEPSKLERAKMMSCADSRHGRKLFSDHENFVAQMAPEMDWAPWILINGKRYKEAEEDLWQFLCDRFIDPRPIHCPKKIIY</sequence>
<keyword id="KW-0325">Glycoprotein</keyword>
<keyword id="KW-1185">Reference proteome</keyword>
<keyword id="KW-0964">Secreted</keyword>
<keyword id="KW-0732">Signal</keyword>
<dbReference type="EMBL" id="HE601438">
    <property type="protein sequence ID" value="CAP23398.1"/>
    <property type="molecule type" value="Genomic_DNA"/>
</dbReference>
<dbReference type="RefSeq" id="XP_002631426.1">
    <property type="nucleotide sequence ID" value="XM_002631380.1"/>
</dbReference>
<dbReference type="SMR" id="Q61Z40"/>
<dbReference type="FunCoup" id="Q61Z40">
    <property type="interactions" value="1"/>
</dbReference>
<dbReference type="EnsemblMetazoa" id="CBG03282.1">
    <property type="protein sequence ID" value="CBG03282.1"/>
    <property type="gene ID" value="WBGene00026170"/>
</dbReference>
<dbReference type="GeneID" id="8573424"/>
<dbReference type="KEGG" id="cbr:CBG_03282"/>
<dbReference type="CTD" id="8573424"/>
<dbReference type="WormBase" id="CBG03282">
    <property type="protein sequence ID" value="CBP06460"/>
    <property type="gene ID" value="WBGene00026170"/>
</dbReference>
<dbReference type="eggNOG" id="KOG3160">
    <property type="taxonomic scope" value="Eukaryota"/>
</dbReference>
<dbReference type="HOGENOM" id="CLU_066886_2_3_1"/>
<dbReference type="InParanoid" id="Q61Z40"/>
<dbReference type="OMA" id="GRINFEY"/>
<dbReference type="OrthoDB" id="958254at2759"/>
<dbReference type="Proteomes" id="UP000008549">
    <property type="component" value="Unassembled WGS sequence"/>
</dbReference>
<dbReference type="GO" id="GO:0005576">
    <property type="term" value="C:extracellular region"/>
    <property type="evidence" value="ECO:0007669"/>
    <property type="project" value="UniProtKB-SubCell"/>
</dbReference>
<dbReference type="GO" id="GO:0016491">
    <property type="term" value="F:oxidoreductase activity"/>
    <property type="evidence" value="ECO:0000318"/>
    <property type="project" value="GO_Central"/>
</dbReference>
<dbReference type="GO" id="GO:0016671">
    <property type="term" value="F:oxidoreductase activity, acting on a sulfur group of donors, disulfide as acceptor"/>
    <property type="evidence" value="ECO:0007669"/>
    <property type="project" value="InterPro"/>
</dbReference>
<dbReference type="InterPro" id="IPR004911">
    <property type="entry name" value="Interferon-induced_GILT"/>
</dbReference>
<dbReference type="PANTHER" id="PTHR13234">
    <property type="entry name" value="GAMMA-INTERFERON INDUCIBLE LYSOSOMAL THIOL REDUCTASE GILT"/>
    <property type="match status" value="1"/>
</dbReference>
<dbReference type="PANTHER" id="PTHR13234:SF24">
    <property type="entry name" value="GILT-LIKE PROTEIN ZK669.3"/>
    <property type="match status" value="1"/>
</dbReference>
<dbReference type="Pfam" id="PF03227">
    <property type="entry name" value="GILT"/>
    <property type="match status" value="1"/>
</dbReference>